<reference key="1">
    <citation type="submission" date="2007-06" db="EMBL/GenBank/DDBJ databases">
        <title>Complete sequence of Sinorhizobium medicae WSM419 chromosome.</title>
        <authorList>
            <consortium name="US DOE Joint Genome Institute"/>
            <person name="Copeland A."/>
            <person name="Lucas S."/>
            <person name="Lapidus A."/>
            <person name="Barry K."/>
            <person name="Glavina del Rio T."/>
            <person name="Dalin E."/>
            <person name="Tice H."/>
            <person name="Pitluck S."/>
            <person name="Chain P."/>
            <person name="Malfatti S."/>
            <person name="Shin M."/>
            <person name="Vergez L."/>
            <person name="Schmutz J."/>
            <person name="Larimer F."/>
            <person name="Land M."/>
            <person name="Hauser L."/>
            <person name="Kyrpides N."/>
            <person name="Mikhailova N."/>
            <person name="Reeve W.G."/>
            <person name="Richardson P."/>
        </authorList>
    </citation>
    <scope>NUCLEOTIDE SEQUENCE [LARGE SCALE GENOMIC DNA]</scope>
    <source>
        <strain>WSM419</strain>
    </source>
</reference>
<comment type="function">
    <text evidence="1">Catalyzes the last two sequential reactions in the de novo biosynthetic pathway for UDP-N-acetylglucosamine (UDP-GlcNAc). The C-terminal domain catalyzes the transfer of acetyl group from acetyl coenzyme A to glucosamine-1-phosphate (GlcN-1-P) to produce N-acetylglucosamine-1-phosphate (GlcNAc-1-P), which is converted into UDP-GlcNAc by the transfer of uridine 5-monophosphate (from uridine 5-triphosphate), a reaction catalyzed by the N-terminal domain.</text>
</comment>
<comment type="catalytic activity">
    <reaction evidence="1">
        <text>alpha-D-glucosamine 1-phosphate + acetyl-CoA = N-acetyl-alpha-D-glucosamine 1-phosphate + CoA + H(+)</text>
        <dbReference type="Rhea" id="RHEA:13725"/>
        <dbReference type="ChEBI" id="CHEBI:15378"/>
        <dbReference type="ChEBI" id="CHEBI:57287"/>
        <dbReference type="ChEBI" id="CHEBI:57288"/>
        <dbReference type="ChEBI" id="CHEBI:57776"/>
        <dbReference type="ChEBI" id="CHEBI:58516"/>
        <dbReference type="EC" id="2.3.1.157"/>
    </reaction>
</comment>
<comment type="catalytic activity">
    <reaction evidence="1">
        <text>N-acetyl-alpha-D-glucosamine 1-phosphate + UTP + H(+) = UDP-N-acetyl-alpha-D-glucosamine + diphosphate</text>
        <dbReference type="Rhea" id="RHEA:13509"/>
        <dbReference type="ChEBI" id="CHEBI:15378"/>
        <dbReference type="ChEBI" id="CHEBI:33019"/>
        <dbReference type="ChEBI" id="CHEBI:46398"/>
        <dbReference type="ChEBI" id="CHEBI:57705"/>
        <dbReference type="ChEBI" id="CHEBI:57776"/>
        <dbReference type="EC" id="2.7.7.23"/>
    </reaction>
</comment>
<comment type="cofactor">
    <cofactor evidence="1">
        <name>Mg(2+)</name>
        <dbReference type="ChEBI" id="CHEBI:18420"/>
    </cofactor>
    <text evidence="1">Binds 1 Mg(2+) ion per subunit.</text>
</comment>
<comment type="pathway">
    <text evidence="1">Nucleotide-sugar biosynthesis; UDP-N-acetyl-alpha-D-glucosamine biosynthesis; N-acetyl-alpha-D-glucosamine 1-phosphate from alpha-D-glucosamine 6-phosphate (route II): step 2/2.</text>
</comment>
<comment type="pathway">
    <text evidence="1">Nucleotide-sugar biosynthesis; UDP-N-acetyl-alpha-D-glucosamine biosynthesis; UDP-N-acetyl-alpha-D-glucosamine from N-acetyl-alpha-D-glucosamine 1-phosphate: step 1/1.</text>
</comment>
<comment type="pathway">
    <text evidence="1">Bacterial outer membrane biogenesis; LPS lipid A biosynthesis.</text>
</comment>
<comment type="subunit">
    <text evidence="1">Homotrimer.</text>
</comment>
<comment type="subcellular location">
    <subcellularLocation>
        <location evidence="1">Cytoplasm</location>
    </subcellularLocation>
</comment>
<comment type="similarity">
    <text evidence="1">In the N-terminal section; belongs to the N-acetylglucosamine-1-phosphate uridyltransferase family.</text>
</comment>
<comment type="similarity">
    <text evidence="1">In the C-terminal section; belongs to the transferase hexapeptide repeat family.</text>
</comment>
<feature type="chain" id="PRO_1000056202" description="Bifunctional protein GlmU">
    <location>
        <begin position="1"/>
        <end position="456"/>
    </location>
</feature>
<feature type="region of interest" description="Pyrophosphorylase" evidence="1">
    <location>
        <begin position="1"/>
        <end position="231"/>
    </location>
</feature>
<feature type="region of interest" description="Linker" evidence="1">
    <location>
        <begin position="232"/>
        <end position="252"/>
    </location>
</feature>
<feature type="region of interest" description="N-acetyltransferase" evidence="1">
    <location>
        <begin position="253"/>
        <end position="456"/>
    </location>
</feature>
<feature type="active site" description="Proton acceptor" evidence="1">
    <location>
        <position position="348"/>
    </location>
</feature>
<feature type="binding site" evidence="1">
    <location>
        <begin position="10"/>
        <end position="13"/>
    </location>
    <ligand>
        <name>UDP-N-acetyl-alpha-D-glucosamine</name>
        <dbReference type="ChEBI" id="CHEBI:57705"/>
    </ligand>
</feature>
<feature type="binding site" evidence="1">
    <location>
        <position position="24"/>
    </location>
    <ligand>
        <name>UDP-N-acetyl-alpha-D-glucosamine</name>
        <dbReference type="ChEBI" id="CHEBI:57705"/>
    </ligand>
</feature>
<feature type="binding site" evidence="1">
    <location>
        <position position="77"/>
    </location>
    <ligand>
        <name>UDP-N-acetyl-alpha-D-glucosamine</name>
        <dbReference type="ChEBI" id="CHEBI:57705"/>
    </ligand>
</feature>
<feature type="binding site" evidence="1">
    <location>
        <begin position="82"/>
        <end position="83"/>
    </location>
    <ligand>
        <name>UDP-N-acetyl-alpha-D-glucosamine</name>
        <dbReference type="ChEBI" id="CHEBI:57705"/>
    </ligand>
</feature>
<feature type="binding site" evidence="1">
    <location>
        <position position="107"/>
    </location>
    <ligand>
        <name>Mg(2+)</name>
        <dbReference type="ChEBI" id="CHEBI:18420"/>
    </ligand>
</feature>
<feature type="binding site" evidence="1">
    <location>
        <position position="143"/>
    </location>
    <ligand>
        <name>UDP-N-acetyl-alpha-D-glucosamine</name>
        <dbReference type="ChEBI" id="CHEBI:57705"/>
    </ligand>
</feature>
<feature type="binding site" evidence="1">
    <location>
        <position position="157"/>
    </location>
    <ligand>
        <name>UDP-N-acetyl-alpha-D-glucosamine</name>
        <dbReference type="ChEBI" id="CHEBI:57705"/>
    </ligand>
</feature>
<feature type="binding site" evidence="1">
    <location>
        <position position="172"/>
    </location>
    <ligand>
        <name>UDP-N-acetyl-alpha-D-glucosamine</name>
        <dbReference type="ChEBI" id="CHEBI:57705"/>
    </ligand>
</feature>
<feature type="binding site" evidence="1">
    <location>
        <position position="229"/>
    </location>
    <ligand>
        <name>Mg(2+)</name>
        <dbReference type="ChEBI" id="CHEBI:18420"/>
    </ligand>
</feature>
<feature type="binding site" evidence="1">
    <location>
        <position position="229"/>
    </location>
    <ligand>
        <name>UDP-N-acetyl-alpha-D-glucosamine</name>
        <dbReference type="ChEBI" id="CHEBI:57705"/>
    </ligand>
</feature>
<feature type="binding site" evidence="1">
    <location>
        <position position="318"/>
    </location>
    <ligand>
        <name>UDP-N-acetyl-alpha-D-glucosamine</name>
        <dbReference type="ChEBI" id="CHEBI:57705"/>
    </ligand>
</feature>
<feature type="binding site" evidence="1">
    <location>
        <position position="336"/>
    </location>
    <ligand>
        <name>UDP-N-acetyl-alpha-D-glucosamine</name>
        <dbReference type="ChEBI" id="CHEBI:57705"/>
    </ligand>
</feature>
<feature type="binding site" evidence="1">
    <location>
        <position position="351"/>
    </location>
    <ligand>
        <name>UDP-N-acetyl-alpha-D-glucosamine</name>
        <dbReference type="ChEBI" id="CHEBI:57705"/>
    </ligand>
</feature>
<feature type="binding site" evidence="1">
    <location>
        <position position="362"/>
    </location>
    <ligand>
        <name>UDP-N-acetyl-alpha-D-glucosamine</name>
        <dbReference type="ChEBI" id="CHEBI:57705"/>
    </ligand>
</feature>
<feature type="binding site" evidence="1">
    <location>
        <position position="365"/>
    </location>
    <ligand>
        <name>acetyl-CoA</name>
        <dbReference type="ChEBI" id="CHEBI:57288"/>
    </ligand>
</feature>
<feature type="binding site" evidence="1">
    <location>
        <begin position="371"/>
        <end position="372"/>
    </location>
    <ligand>
        <name>acetyl-CoA</name>
        <dbReference type="ChEBI" id="CHEBI:57288"/>
    </ligand>
</feature>
<feature type="binding site" evidence="1">
    <location>
        <position position="390"/>
    </location>
    <ligand>
        <name>acetyl-CoA</name>
        <dbReference type="ChEBI" id="CHEBI:57288"/>
    </ligand>
</feature>
<feature type="binding site" evidence="1">
    <location>
        <position position="408"/>
    </location>
    <ligand>
        <name>acetyl-CoA</name>
        <dbReference type="ChEBI" id="CHEBI:57288"/>
    </ligand>
</feature>
<feature type="binding site" evidence="1">
    <location>
        <position position="425"/>
    </location>
    <ligand>
        <name>acetyl-CoA</name>
        <dbReference type="ChEBI" id="CHEBI:57288"/>
    </ligand>
</feature>
<gene>
    <name evidence="1" type="primary">glmU</name>
    <name type="ordered locus">Smed_1405</name>
</gene>
<protein>
    <recommendedName>
        <fullName evidence="1">Bifunctional protein GlmU</fullName>
    </recommendedName>
    <domain>
        <recommendedName>
            <fullName evidence="1">UDP-N-acetylglucosamine pyrophosphorylase</fullName>
            <ecNumber evidence="1">2.7.7.23</ecNumber>
        </recommendedName>
        <alternativeName>
            <fullName evidence="1">N-acetylglucosamine-1-phosphate uridyltransferase</fullName>
        </alternativeName>
    </domain>
    <domain>
        <recommendedName>
            <fullName evidence="1">Glucosamine-1-phosphate N-acetyltransferase</fullName>
            <ecNumber evidence="1">2.3.1.157</ecNumber>
        </recommendedName>
    </domain>
</protein>
<sequence length="456" mass="47642">MERTCLAIILAAGESTRMKSAMSKVLHPVAGRAMISHVVDALASASISDVALVVGRDAEAVAAAANTGDVAVTALLQKERLGTAHAVLAAREAIAKGYDDILVVFGDTPLITAAPLEAARDGLAAGNDVVVIGFQAADPTGYGRLIVEGDALVAIREHRDASEEERRITYCNGGLMAIDGRKALDLLDRVGNTNAKGEYYLTDLVEIVRSLGGRAIAVEAPEEELTGCNTRAELAYIERLWQQRRRHELMLAGVSMVAPETVFLSWDTALAQDVLVEPNVVFGPGVRVESGAIIHAFSHLEGAHVRAGAAVGPFARLRTGADLGANSKVGNFCEVKKAEIGAGAKVSHLTYIGDAFVGAGTNIGAGTITCNYDGVNKHVTRIGANAFIGSNSALVAPVSIGDGALIASGSVITEDVPADAVAFGRARQEVKPGRAPILRERYKAEKLARKIAKAAE</sequence>
<evidence type="ECO:0000255" key="1">
    <source>
        <dbReference type="HAMAP-Rule" id="MF_01631"/>
    </source>
</evidence>
<proteinExistence type="inferred from homology"/>
<accession>A6U9C1</accession>
<organism>
    <name type="scientific">Sinorhizobium medicae (strain WSM419)</name>
    <name type="common">Ensifer medicae</name>
    <dbReference type="NCBI Taxonomy" id="366394"/>
    <lineage>
        <taxon>Bacteria</taxon>
        <taxon>Pseudomonadati</taxon>
        <taxon>Pseudomonadota</taxon>
        <taxon>Alphaproteobacteria</taxon>
        <taxon>Hyphomicrobiales</taxon>
        <taxon>Rhizobiaceae</taxon>
        <taxon>Sinorhizobium/Ensifer group</taxon>
        <taxon>Sinorhizobium</taxon>
    </lineage>
</organism>
<keyword id="KW-0012">Acyltransferase</keyword>
<keyword id="KW-0133">Cell shape</keyword>
<keyword id="KW-0961">Cell wall biogenesis/degradation</keyword>
<keyword id="KW-0963">Cytoplasm</keyword>
<keyword id="KW-0460">Magnesium</keyword>
<keyword id="KW-0479">Metal-binding</keyword>
<keyword id="KW-0511">Multifunctional enzyme</keyword>
<keyword id="KW-0548">Nucleotidyltransferase</keyword>
<keyword id="KW-0573">Peptidoglycan synthesis</keyword>
<keyword id="KW-0677">Repeat</keyword>
<keyword id="KW-0808">Transferase</keyword>
<dbReference type="EC" id="2.7.7.23" evidence="1"/>
<dbReference type="EC" id="2.3.1.157" evidence="1"/>
<dbReference type="EMBL" id="CP000738">
    <property type="protein sequence ID" value="ABR60251.1"/>
    <property type="molecule type" value="Genomic_DNA"/>
</dbReference>
<dbReference type="RefSeq" id="WP_011975561.1">
    <property type="nucleotide sequence ID" value="NC_009636.1"/>
</dbReference>
<dbReference type="RefSeq" id="YP_001327086.1">
    <property type="nucleotide sequence ID" value="NC_009636.1"/>
</dbReference>
<dbReference type="SMR" id="A6U9C1"/>
<dbReference type="STRING" id="366394.Smed_1405"/>
<dbReference type="GeneID" id="61612633"/>
<dbReference type="KEGG" id="smd:Smed_1405"/>
<dbReference type="PATRIC" id="fig|366394.8.peg.4534"/>
<dbReference type="eggNOG" id="COG1207">
    <property type="taxonomic scope" value="Bacteria"/>
</dbReference>
<dbReference type="HOGENOM" id="CLU_029499_15_2_5"/>
<dbReference type="OrthoDB" id="9775031at2"/>
<dbReference type="UniPathway" id="UPA00113">
    <property type="reaction ID" value="UER00532"/>
</dbReference>
<dbReference type="UniPathway" id="UPA00113">
    <property type="reaction ID" value="UER00533"/>
</dbReference>
<dbReference type="UniPathway" id="UPA00973"/>
<dbReference type="Proteomes" id="UP000001108">
    <property type="component" value="Chromosome"/>
</dbReference>
<dbReference type="GO" id="GO:0005737">
    <property type="term" value="C:cytoplasm"/>
    <property type="evidence" value="ECO:0007669"/>
    <property type="project" value="UniProtKB-SubCell"/>
</dbReference>
<dbReference type="GO" id="GO:0016020">
    <property type="term" value="C:membrane"/>
    <property type="evidence" value="ECO:0007669"/>
    <property type="project" value="GOC"/>
</dbReference>
<dbReference type="GO" id="GO:0019134">
    <property type="term" value="F:glucosamine-1-phosphate N-acetyltransferase activity"/>
    <property type="evidence" value="ECO:0007669"/>
    <property type="project" value="UniProtKB-UniRule"/>
</dbReference>
<dbReference type="GO" id="GO:0000287">
    <property type="term" value="F:magnesium ion binding"/>
    <property type="evidence" value="ECO:0007669"/>
    <property type="project" value="UniProtKB-UniRule"/>
</dbReference>
<dbReference type="GO" id="GO:0003977">
    <property type="term" value="F:UDP-N-acetylglucosamine diphosphorylase activity"/>
    <property type="evidence" value="ECO:0007669"/>
    <property type="project" value="UniProtKB-UniRule"/>
</dbReference>
<dbReference type="GO" id="GO:0000902">
    <property type="term" value="P:cell morphogenesis"/>
    <property type="evidence" value="ECO:0007669"/>
    <property type="project" value="UniProtKB-UniRule"/>
</dbReference>
<dbReference type="GO" id="GO:0071555">
    <property type="term" value="P:cell wall organization"/>
    <property type="evidence" value="ECO:0007669"/>
    <property type="project" value="UniProtKB-KW"/>
</dbReference>
<dbReference type="GO" id="GO:0009245">
    <property type="term" value="P:lipid A biosynthetic process"/>
    <property type="evidence" value="ECO:0007669"/>
    <property type="project" value="UniProtKB-UniRule"/>
</dbReference>
<dbReference type="GO" id="GO:0009252">
    <property type="term" value="P:peptidoglycan biosynthetic process"/>
    <property type="evidence" value="ECO:0007669"/>
    <property type="project" value="UniProtKB-UniRule"/>
</dbReference>
<dbReference type="GO" id="GO:0008360">
    <property type="term" value="P:regulation of cell shape"/>
    <property type="evidence" value="ECO:0007669"/>
    <property type="project" value="UniProtKB-KW"/>
</dbReference>
<dbReference type="GO" id="GO:0006048">
    <property type="term" value="P:UDP-N-acetylglucosamine biosynthetic process"/>
    <property type="evidence" value="ECO:0007669"/>
    <property type="project" value="UniProtKB-UniPathway"/>
</dbReference>
<dbReference type="CDD" id="cd02540">
    <property type="entry name" value="GT2_GlmU_N_bac"/>
    <property type="match status" value="1"/>
</dbReference>
<dbReference type="CDD" id="cd03353">
    <property type="entry name" value="LbH_GlmU_C"/>
    <property type="match status" value="1"/>
</dbReference>
<dbReference type="Gene3D" id="2.160.10.10">
    <property type="entry name" value="Hexapeptide repeat proteins"/>
    <property type="match status" value="1"/>
</dbReference>
<dbReference type="Gene3D" id="3.90.550.10">
    <property type="entry name" value="Spore Coat Polysaccharide Biosynthesis Protein SpsA, Chain A"/>
    <property type="match status" value="1"/>
</dbReference>
<dbReference type="HAMAP" id="MF_01631">
    <property type="entry name" value="GlmU"/>
    <property type="match status" value="1"/>
</dbReference>
<dbReference type="InterPro" id="IPR005882">
    <property type="entry name" value="Bifunctional_GlmU"/>
</dbReference>
<dbReference type="InterPro" id="IPR050065">
    <property type="entry name" value="GlmU-like"/>
</dbReference>
<dbReference type="InterPro" id="IPR038009">
    <property type="entry name" value="GlmU_C_LbH"/>
</dbReference>
<dbReference type="InterPro" id="IPR001451">
    <property type="entry name" value="Hexapep"/>
</dbReference>
<dbReference type="InterPro" id="IPR018357">
    <property type="entry name" value="Hexapep_transf_CS"/>
</dbReference>
<dbReference type="InterPro" id="IPR025877">
    <property type="entry name" value="MobA-like_NTP_Trfase"/>
</dbReference>
<dbReference type="InterPro" id="IPR029044">
    <property type="entry name" value="Nucleotide-diphossugar_trans"/>
</dbReference>
<dbReference type="InterPro" id="IPR011004">
    <property type="entry name" value="Trimer_LpxA-like_sf"/>
</dbReference>
<dbReference type="NCBIfam" id="TIGR01173">
    <property type="entry name" value="glmU"/>
    <property type="match status" value="1"/>
</dbReference>
<dbReference type="NCBIfam" id="NF010933">
    <property type="entry name" value="PRK14353.1"/>
    <property type="match status" value="1"/>
</dbReference>
<dbReference type="PANTHER" id="PTHR43584:SF3">
    <property type="entry name" value="BIFUNCTIONAL PROTEIN GLMU"/>
    <property type="match status" value="1"/>
</dbReference>
<dbReference type="PANTHER" id="PTHR43584">
    <property type="entry name" value="NUCLEOTIDYL TRANSFERASE"/>
    <property type="match status" value="1"/>
</dbReference>
<dbReference type="Pfam" id="PF00132">
    <property type="entry name" value="Hexapep"/>
    <property type="match status" value="1"/>
</dbReference>
<dbReference type="Pfam" id="PF12804">
    <property type="entry name" value="NTP_transf_3"/>
    <property type="match status" value="1"/>
</dbReference>
<dbReference type="SUPFAM" id="SSF53448">
    <property type="entry name" value="Nucleotide-diphospho-sugar transferases"/>
    <property type="match status" value="1"/>
</dbReference>
<dbReference type="SUPFAM" id="SSF51161">
    <property type="entry name" value="Trimeric LpxA-like enzymes"/>
    <property type="match status" value="1"/>
</dbReference>
<dbReference type="PROSITE" id="PS00101">
    <property type="entry name" value="HEXAPEP_TRANSFERASES"/>
    <property type="match status" value="1"/>
</dbReference>
<name>GLMU_SINMW</name>